<keyword id="KW-0067">ATP-binding</keyword>
<keyword id="KW-0342">GTP-binding</keyword>
<keyword id="KW-0547">Nucleotide-binding</keyword>
<keyword id="KW-1185">Reference proteome</keyword>
<reference key="1">
    <citation type="journal article" date="2004" name="Proc. Natl. Acad. Sci. U.S.A.">
        <title>The complete genomic sequence of Nocardia farcinica IFM 10152.</title>
        <authorList>
            <person name="Ishikawa J."/>
            <person name="Yamashita A."/>
            <person name="Mikami Y."/>
            <person name="Hoshino Y."/>
            <person name="Kurita H."/>
            <person name="Hotta K."/>
            <person name="Shiba T."/>
            <person name="Hattori M."/>
        </authorList>
    </citation>
    <scope>NUCLEOTIDE SEQUENCE [LARGE SCALE GENOMIC DNA]</scope>
    <source>
        <strain>IFM 10152</strain>
    </source>
</reference>
<organism>
    <name type="scientific">Nocardia farcinica (strain IFM 10152)</name>
    <dbReference type="NCBI Taxonomy" id="247156"/>
    <lineage>
        <taxon>Bacteria</taxon>
        <taxon>Bacillati</taxon>
        <taxon>Actinomycetota</taxon>
        <taxon>Actinomycetes</taxon>
        <taxon>Mycobacteriales</taxon>
        <taxon>Nocardiaceae</taxon>
        <taxon>Nocardia</taxon>
    </lineage>
</organism>
<accession>Q5YTQ0</accession>
<proteinExistence type="inferred from homology"/>
<sequence>MTRVESNNTASQAPPSGAGTLEQQVEVVIVTGLSGAGRGTAAKVLEDLGWYVADNLPPELIGRMVELGAAADPPIRRLALVMDVRSRFFTGDLSVVADQLRALGLRTRVLFLEASDDVLIRRFGFARRRHPLQSESADGTLSAGIAVERVRLAGVKAAADLVIDTTELSIHQLHRKLEEAYGGGAPAALQLTVQSFGFKYGVPLDADMVLDVRFLPNPHWIPELREHSGQETVVSEYVLSRPGAQDYLHTCHHLVDLTTSGYRQEGKRYMTVAVGCTGGKHRSVAIAEALGELIGADTSAESADVVRVVHRDLGRE</sequence>
<name>Y3593_NOCFA</name>
<evidence type="ECO:0000255" key="1">
    <source>
        <dbReference type="HAMAP-Rule" id="MF_00636"/>
    </source>
</evidence>
<dbReference type="EMBL" id="AP006618">
    <property type="protein sequence ID" value="BAD58441.1"/>
    <property type="molecule type" value="Genomic_DNA"/>
</dbReference>
<dbReference type="SMR" id="Q5YTQ0"/>
<dbReference type="STRING" id="247156.NFA_35930"/>
<dbReference type="GeneID" id="61134289"/>
<dbReference type="KEGG" id="nfa:NFA_35930"/>
<dbReference type="eggNOG" id="COG1660">
    <property type="taxonomic scope" value="Bacteria"/>
</dbReference>
<dbReference type="HOGENOM" id="CLU_059558_0_0_11"/>
<dbReference type="OrthoDB" id="9784461at2"/>
<dbReference type="Proteomes" id="UP000006820">
    <property type="component" value="Chromosome"/>
</dbReference>
<dbReference type="GO" id="GO:0005524">
    <property type="term" value="F:ATP binding"/>
    <property type="evidence" value="ECO:0007669"/>
    <property type="project" value="UniProtKB-UniRule"/>
</dbReference>
<dbReference type="GO" id="GO:0005525">
    <property type="term" value="F:GTP binding"/>
    <property type="evidence" value="ECO:0007669"/>
    <property type="project" value="UniProtKB-UniRule"/>
</dbReference>
<dbReference type="Gene3D" id="3.40.50.300">
    <property type="entry name" value="P-loop containing nucleotide triphosphate hydrolases"/>
    <property type="match status" value="1"/>
</dbReference>
<dbReference type="HAMAP" id="MF_00636">
    <property type="entry name" value="RapZ_like"/>
    <property type="match status" value="1"/>
</dbReference>
<dbReference type="InterPro" id="IPR027417">
    <property type="entry name" value="P-loop_NTPase"/>
</dbReference>
<dbReference type="InterPro" id="IPR005337">
    <property type="entry name" value="RapZ-like"/>
</dbReference>
<dbReference type="InterPro" id="IPR053930">
    <property type="entry name" value="RapZ-like_N"/>
</dbReference>
<dbReference type="InterPro" id="IPR053931">
    <property type="entry name" value="RapZ_C"/>
</dbReference>
<dbReference type="NCBIfam" id="NF003828">
    <property type="entry name" value="PRK05416.1"/>
    <property type="match status" value="1"/>
</dbReference>
<dbReference type="PANTHER" id="PTHR30448">
    <property type="entry name" value="RNASE ADAPTER PROTEIN RAPZ"/>
    <property type="match status" value="1"/>
</dbReference>
<dbReference type="PANTHER" id="PTHR30448:SF0">
    <property type="entry name" value="RNASE ADAPTER PROTEIN RAPZ"/>
    <property type="match status" value="1"/>
</dbReference>
<dbReference type="Pfam" id="PF22740">
    <property type="entry name" value="PapZ_C"/>
    <property type="match status" value="1"/>
</dbReference>
<dbReference type="Pfam" id="PF03668">
    <property type="entry name" value="RapZ-like_N"/>
    <property type="match status" value="1"/>
</dbReference>
<dbReference type="PIRSF" id="PIRSF005052">
    <property type="entry name" value="P-loopkin"/>
    <property type="match status" value="1"/>
</dbReference>
<dbReference type="SUPFAM" id="SSF52540">
    <property type="entry name" value="P-loop containing nucleoside triphosphate hydrolases"/>
    <property type="match status" value="1"/>
</dbReference>
<gene>
    <name type="ordered locus">NFA_35930</name>
</gene>
<feature type="chain" id="PRO_0000107737" description="Nucleotide-binding protein NFA_35930">
    <location>
        <begin position="1"/>
        <end position="316"/>
    </location>
</feature>
<feature type="binding site" evidence="1">
    <location>
        <begin position="32"/>
        <end position="39"/>
    </location>
    <ligand>
        <name>ATP</name>
        <dbReference type="ChEBI" id="CHEBI:30616"/>
    </ligand>
</feature>
<feature type="binding site" evidence="1">
    <location>
        <begin position="83"/>
        <end position="86"/>
    </location>
    <ligand>
        <name>GTP</name>
        <dbReference type="ChEBI" id="CHEBI:37565"/>
    </ligand>
</feature>
<protein>
    <recommendedName>
        <fullName evidence="1">Nucleotide-binding protein NFA_35930</fullName>
    </recommendedName>
</protein>
<comment type="function">
    <text evidence="1">Displays ATPase and GTPase activities.</text>
</comment>
<comment type="similarity">
    <text evidence="1">Belongs to the RapZ-like family.</text>
</comment>